<sequence length="96" mass="10567">MALSEAEVRHVARLARIALSDEEIALMQAQLSAILDYIAMLQEVDVSNVPPTAQVTGLTTVWRPDVVGEMLTQEQALANAPDQQDGMFRVRAVFDE</sequence>
<dbReference type="EC" id="6.3.5.-" evidence="1"/>
<dbReference type="EMBL" id="CP000909">
    <property type="protein sequence ID" value="ABY34654.1"/>
    <property type="molecule type" value="Genomic_DNA"/>
</dbReference>
<dbReference type="RefSeq" id="WP_012257310.1">
    <property type="nucleotide sequence ID" value="NC_010175.1"/>
</dbReference>
<dbReference type="RefSeq" id="YP_001635043.1">
    <property type="nucleotide sequence ID" value="NC_010175.1"/>
</dbReference>
<dbReference type="SMR" id="A9WA95"/>
<dbReference type="FunCoup" id="A9WA95">
    <property type="interactions" value="433"/>
</dbReference>
<dbReference type="STRING" id="324602.Caur_1426"/>
<dbReference type="EnsemblBacteria" id="ABY34654">
    <property type="protein sequence ID" value="ABY34654"/>
    <property type="gene ID" value="Caur_1426"/>
</dbReference>
<dbReference type="KEGG" id="cau:Caur_1426"/>
<dbReference type="PATRIC" id="fig|324602.8.peg.1621"/>
<dbReference type="eggNOG" id="COG0721">
    <property type="taxonomic scope" value="Bacteria"/>
</dbReference>
<dbReference type="HOGENOM" id="CLU_105899_1_0_0"/>
<dbReference type="InParanoid" id="A9WA95"/>
<dbReference type="Proteomes" id="UP000002008">
    <property type="component" value="Chromosome"/>
</dbReference>
<dbReference type="GO" id="GO:0050566">
    <property type="term" value="F:asparaginyl-tRNA synthase (glutamine-hydrolyzing) activity"/>
    <property type="evidence" value="ECO:0007669"/>
    <property type="project" value="RHEA"/>
</dbReference>
<dbReference type="GO" id="GO:0005524">
    <property type="term" value="F:ATP binding"/>
    <property type="evidence" value="ECO:0007669"/>
    <property type="project" value="UniProtKB-KW"/>
</dbReference>
<dbReference type="GO" id="GO:0050567">
    <property type="term" value="F:glutaminyl-tRNA synthase (glutamine-hydrolyzing) activity"/>
    <property type="evidence" value="ECO:0007669"/>
    <property type="project" value="UniProtKB-UniRule"/>
</dbReference>
<dbReference type="GO" id="GO:0070681">
    <property type="term" value="P:glutaminyl-tRNAGln biosynthesis via transamidation"/>
    <property type="evidence" value="ECO:0000318"/>
    <property type="project" value="GO_Central"/>
</dbReference>
<dbReference type="GO" id="GO:0006450">
    <property type="term" value="P:regulation of translational fidelity"/>
    <property type="evidence" value="ECO:0007669"/>
    <property type="project" value="InterPro"/>
</dbReference>
<dbReference type="GO" id="GO:0006412">
    <property type="term" value="P:translation"/>
    <property type="evidence" value="ECO:0007669"/>
    <property type="project" value="UniProtKB-UniRule"/>
</dbReference>
<dbReference type="Gene3D" id="1.10.20.60">
    <property type="entry name" value="Glu-tRNAGln amidotransferase C subunit, N-terminal domain"/>
    <property type="match status" value="1"/>
</dbReference>
<dbReference type="HAMAP" id="MF_00122">
    <property type="entry name" value="GatC"/>
    <property type="match status" value="1"/>
</dbReference>
<dbReference type="InterPro" id="IPR036113">
    <property type="entry name" value="Asp/Glu-ADT_sf_sub_c"/>
</dbReference>
<dbReference type="InterPro" id="IPR003837">
    <property type="entry name" value="GatC"/>
</dbReference>
<dbReference type="NCBIfam" id="TIGR00135">
    <property type="entry name" value="gatC"/>
    <property type="match status" value="1"/>
</dbReference>
<dbReference type="PANTHER" id="PTHR15004">
    <property type="entry name" value="GLUTAMYL-TRNA(GLN) AMIDOTRANSFERASE SUBUNIT C, MITOCHONDRIAL"/>
    <property type="match status" value="1"/>
</dbReference>
<dbReference type="PANTHER" id="PTHR15004:SF0">
    <property type="entry name" value="GLUTAMYL-TRNA(GLN) AMIDOTRANSFERASE SUBUNIT C, MITOCHONDRIAL"/>
    <property type="match status" value="1"/>
</dbReference>
<dbReference type="Pfam" id="PF02686">
    <property type="entry name" value="GatC"/>
    <property type="match status" value="1"/>
</dbReference>
<dbReference type="SUPFAM" id="SSF141000">
    <property type="entry name" value="Glu-tRNAGln amidotransferase C subunit"/>
    <property type="match status" value="1"/>
</dbReference>
<name>GATC_CHLAA</name>
<proteinExistence type="inferred from homology"/>
<reference key="1">
    <citation type="journal article" date="2011" name="BMC Genomics">
        <title>Complete genome sequence of the filamentous anoxygenic phototrophic bacterium Chloroflexus aurantiacus.</title>
        <authorList>
            <person name="Tang K.H."/>
            <person name="Barry K."/>
            <person name="Chertkov O."/>
            <person name="Dalin E."/>
            <person name="Han C.S."/>
            <person name="Hauser L.J."/>
            <person name="Honchak B.M."/>
            <person name="Karbach L.E."/>
            <person name="Land M.L."/>
            <person name="Lapidus A."/>
            <person name="Larimer F.W."/>
            <person name="Mikhailova N."/>
            <person name="Pitluck S."/>
            <person name="Pierson B.K."/>
            <person name="Blankenship R.E."/>
        </authorList>
    </citation>
    <scope>NUCLEOTIDE SEQUENCE [LARGE SCALE GENOMIC DNA]</scope>
    <source>
        <strain>ATCC 29366 / DSM 635 / J-10-fl</strain>
    </source>
</reference>
<protein>
    <recommendedName>
        <fullName evidence="1">Aspartyl/glutamyl-tRNA(Asn/Gln) amidotransferase subunit C</fullName>
        <shortName evidence="1">Asp/Glu-ADT subunit C</shortName>
        <ecNumber evidence="1">6.3.5.-</ecNumber>
    </recommendedName>
</protein>
<accession>A9WA95</accession>
<feature type="chain" id="PRO_1000076179" description="Aspartyl/glutamyl-tRNA(Asn/Gln) amidotransferase subunit C">
    <location>
        <begin position="1"/>
        <end position="96"/>
    </location>
</feature>
<keyword id="KW-0067">ATP-binding</keyword>
<keyword id="KW-0436">Ligase</keyword>
<keyword id="KW-0547">Nucleotide-binding</keyword>
<keyword id="KW-0648">Protein biosynthesis</keyword>
<keyword id="KW-1185">Reference proteome</keyword>
<comment type="function">
    <text evidence="1">Allows the formation of correctly charged Asn-tRNA(Asn) or Gln-tRNA(Gln) through the transamidation of misacylated Asp-tRNA(Asn) or Glu-tRNA(Gln) in organisms which lack either or both of asparaginyl-tRNA or glutaminyl-tRNA synthetases. The reaction takes place in the presence of glutamine and ATP through an activated phospho-Asp-tRNA(Asn) or phospho-Glu-tRNA(Gln).</text>
</comment>
<comment type="catalytic activity">
    <reaction evidence="1">
        <text>L-glutamyl-tRNA(Gln) + L-glutamine + ATP + H2O = L-glutaminyl-tRNA(Gln) + L-glutamate + ADP + phosphate + H(+)</text>
        <dbReference type="Rhea" id="RHEA:17521"/>
        <dbReference type="Rhea" id="RHEA-COMP:9681"/>
        <dbReference type="Rhea" id="RHEA-COMP:9684"/>
        <dbReference type="ChEBI" id="CHEBI:15377"/>
        <dbReference type="ChEBI" id="CHEBI:15378"/>
        <dbReference type="ChEBI" id="CHEBI:29985"/>
        <dbReference type="ChEBI" id="CHEBI:30616"/>
        <dbReference type="ChEBI" id="CHEBI:43474"/>
        <dbReference type="ChEBI" id="CHEBI:58359"/>
        <dbReference type="ChEBI" id="CHEBI:78520"/>
        <dbReference type="ChEBI" id="CHEBI:78521"/>
        <dbReference type="ChEBI" id="CHEBI:456216"/>
    </reaction>
</comment>
<comment type="catalytic activity">
    <reaction evidence="1">
        <text>L-aspartyl-tRNA(Asn) + L-glutamine + ATP + H2O = L-asparaginyl-tRNA(Asn) + L-glutamate + ADP + phosphate + 2 H(+)</text>
        <dbReference type="Rhea" id="RHEA:14513"/>
        <dbReference type="Rhea" id="RHEA-COMP:9674"/>
        <dbReference type="Rhea" id="RHEA-COMP:9677"/>
        <dbReference type="ChEBI" id="CHEBI:15377"/>
        <dbReference type="ChEBI" id="CHEBI:15378"/>
        <dbReference type="ChEBI" id="CHEBI:29985"/>
        <dbReference type="ChEBI" id="CHEBI:30616"/>
        <dbReference type="ChEBI" id="CHEBI:43474"/>
        <dbReference type="ChEBI" id="CHEBI:58359"/>
        <dbReference type="ChEBI" id="CHEBI:78515"/>
        <dbReference type="ChEBI" id="CHEBI:78516"/>
        <dbReference type="ChEBI" id="CHEBI:456216"/>
    </reaction>
</comment>
<comment type="subunit">
    <text evidence="1">Heterotrimer of A, B and C subunits.</text>
</comment>
<comment type="similarity">
    <text evidence="1">Belongs to the GatC family.</text>
</comment>
<evidence type="ECO:0000255" key="1">
    <source>
        <dbReference type="HAMAP-Rule" id="MF_00122"/>
    </source>
</evidence>
<gene>
    <name evidence="1" type="primary">gatC</name>
    <name type="ordered locus">Caur_1426</name>
</gene>
<organism>
    <name type="scientific">Chloroflexus aurantiacus (strain ATCC 29366 / DSM 635 / J-10-fl)</name>
    <dbReference type="NCBI Taxonomy" id="324602"/>
    <lineage>
        <taxon>Bacteria</taxon>
        <taxon>Bacillati</taxon>
        <taxon>Chloroflexota</taxon>
        <taxon>Chloroflexia</taxon>
        <taxon>Chloroflexales</taxon>
        <taxon>Chloroflexineae</taxon>
        <taxon>Chloroflexaceae</taxon>
        <taxon>Chloroflexus</taxon>
    </lineage>
</organism>